<comment type="function">
    <text evidence="1">Catalyzes the addition of meso-diaminopimelic acid to the nucleotide precursor UDP-N-acetylmuramoyl-L-alanyl-D-glutamate (UMAG) in the biosynthesis of bacterial cell-wall peptidoglycan.</text>
</comment>
<comment type="catalytic activity">
    <reaction evidence="1">
        <text>UDP-N-acetyl-alpha-D-muramoyl-L-alanyl-D-glutamate + meso-2,6-diaminopimelate + ATP = UDP-N-acetyl-alpha-D-muramoyl-L-alanyl-gamma-D-glutamyl-meso-2,6-diaminopimelate + ADP + phosphate + H(+)</text>
        <dbReference type="Rhea" id="RHEA:23676"/>
        <dbReference type="ChEBI" id="CHEBI:15378"/>
        <dbReference type="ChEBI" id="CHEBI:30616"/>
        <dbReference type="ChEBI" id="CHEBI:43474"/>
        <dbReference type="ChEBI" id="CHEBI:57791"/>
        <dbReference type="ChEBI" id="CHEBI:83900"/>
        <dbReference type="ChEBI" id="CHEBI:83905"/>
        <dbReference type="ChEBI" id="CHEBI:456216"/>
        <dbReference type="EC" id="6.3.2.13"/>
    </reaction>
</comment>
<comment type="cofactor">
    <cofactor evidence="1">
        <name>Mg(2+)</name>
        <dbReference type="ChEBI" id="CHEBI:18420"/>
    </cofactor>
</comment>
<comment type="pathway">
    <text evidence="1">Cell wall biogenesis; peptidoglycan biosynthesis.</text>
</comment>
<comment type="subcellular location">
    <subcellularLocation>
        <location evidence="1">Cytoplasm</location>
    </subcellularLocation>
</comment>
<comment type="PTM">
    <text evidence="1">Carboxylation is probably crucial for Mg(2+) binding and, consequently, for the gamma-phosphate positioning of ATP.</text>
</comment>
<comment type="similarity">
    <text evidence="1">Belongs to the MurCDEF family. MurE subfamily.</text>
</comment>
<evidence type="ECO:0000255" key="1">
    <source>
        <dbReference type="HAMAP-Rule" id="MF_00208"/>
    </source>
</evidence>
<organism>
    <name type="scientific">Acidovorax sp. (strain JS42)</name>
    <dbReference type="NCBI Taxonomy" id="232721"/>
    <lineage>
        <taxon>Bacteria</taxon>
        <taxon>Pseudomonadati</taxon>
        <taxon>Pseudomonadota</taxon>
        <taxon>Betaproteobacteria</taxon>
        <taxon>Burkholderiales</taxon>
        <taxon>Comamonadaceae</taxon>
        <taxon>Acidovorax</taxon>
    </lineage>
</organism>
<dbReference type="EC" id="6.3.2.13" evidence="1"/>
<dbReference type="EMBL" id="CP000539">
    <property type="protein sequence ID" value="ABM43786.1"/>
    <property type="molecule type" value="Genomic_DNA"/>
</dbReference>
<dbReference type="SMR" id="A1WC11"/>
<dbReference type="STRING" id="232721.Ajs_3675"/>
<dbReference type="KEGG" id="ajs:Ajs_3675"/>
<dbReference type="eggNOG" id="COG0769">
    <property type="taxonomic scope" value="Bacteria"/>
</dbReference>
<dbReference type="HOGENOM" id="CLU_022291_3_2_4"/>
<dbReference type="UniPathway" id="UPA00219"/>
<dbReference type="Proteomes" id="UP000000645">
    <property type="component" value="Chromosome"/>
</dbReference>
<dbReference type="GO" id="GO:0005737">
    <property type="term" value="C:cytoplasm"/>
    <property type="evidence" value="ECO:0007669"/>
    <property type="project" value="UniProtKB-SubCell"/>
</dbReference>
<dbReference type="GO" id="GO:0005524">
    <property type="term" value="F:ATP binding"/>
    <property type="evidence" value="ECO:0007669"/>
    <property type="project" value="UniProtKB-UniRule"/>
</dbReference>
<dbReference type="GO" id="GO:0000287">
    <property type="term" value="F:magnesium ion binding"/>
    <property type="evidence" value="ECO:0007669"/>
    <property type="project" value="UniProtKB-UniRule"/>
</dbReference>
<dbReference type="GO" id="GO:0008765">
    <property type="term" value="F:UDP-N-acetylmuramoylalanyl-D-glutamate-2,6-diaminopimelate ligase activity"/>
    <property type="evidence" value="ECO:0007669"/>
    <property type="project" value="UniProtKB-UniRule"/>
</dbReference>
<dbReference type="GO" id="GO:0051301">
    <property type="term" value="P:cell division"/>
    <property type="evidence" value="ECO:0007669"/>
    <property type="project" value="UniProtKB-KW"/>
</dbReference>
<dbReference type="GO" id="GO:0071555">
    <property type="term" value="P:cell wall organization"/>
    <property type="evidence" value="ECO:0007669"/>
    <property type="project" value="UniProtKB-KW"/>
</dbReference>
<dbReference type="GO" id="GO:0009252">
    <property type="term" value="P:peptidoglycan biosynthetic process"/>
    <property type="evidence" value="ECO:0007669"/>
    <property type="project" value="UniProtKB-UniRule"/>
</dbReference>
<dbReference type="GO" id="GO:0008360">
    <property type="term" value="P:regulation of cell shape"/>
    <property type="evidence" value="ECO:0007669"/>
    <property type="project" value="UniProtKB-KW"/>
</dbReference>
<dbReference type="Gene3D" id="3.90.190.20">
    <property type="entry name" value="Mur ligase, C-terminal domain"/>
    <property type="match status" value="1"/>
</dbReference>
<dbReference type="Gene3D" id="3.40.1190.10">
    <property type="entry name" value="Mur-like, catalytic domain"/>
    <property type="match status" value="1"/>
</dbReference>
<dbReference type="Gene3D" id="3.40.1390.10">
    <property type="entry name" value="MurE/MurF, N-terminal domain"/>
    <property type="match status" value="1"/>
</dbReference>
<dbReference type="HAMAP" id="MF_00208">
    <property type="entry name" value="MurE"/>
    <property type="match status" value="1"/>
</dbReference>
<dbReference type="InterPro" id="IPR036565">
    <property type="entry name" value="Mur-like_cat_sf"/>
</dbReference>
<dbReference type="InterPro" id="IPR004101">
    <property type="entry name" value="Mur_ligase_C"/>
</dbReference>
<dbReference type="InterPro" id="IPR036615">
    <property type="entry name" value="Mur_ligase_C_dom_sf"/>
</dbReference>
<dbReference type="InterPro" id="IPR013221">
    <property type="entry name" value="Mur_ligase_cen"/>
</dbReference>
<dbReference type="InterPro" id="IPR035911">
    <property type="entry name" value="MurE/MurF_N"/>
</dbReference>
<dbReference type="InterPro" id="IPR005761">
    <property type="entry name" value="UDP-N-AcMur-Glu-dNH2Pim_ligase"/>
</dbReference>
<dbReference type="NCBIfam" id="TIGR01085">
    <property type="entry name" value="murE"/>
    <property type="match status" value="1"/>
</dbReference>
<dbReference type="NCBIfam" id="NF001126">
    <property type="entry name" value="PRK00139.1-4"/>
    <property type="match status" value="1"/>
</dbReference>
<dbReference type="PANTHER" id="PTHR23135">
    <property type="entry name" value="MUR LIGASE FAMILY MEMBER"/>
    <property type="match status" value="1"/>
</dbReference>
<dbReference type="PANTHER" id="PTHR23135:SF4">
    <property type="entry name" value="UDP-N-ACETYLMURAMOYL-L-ALANYL-D-GLUTAMATE--2,6-DIAMINOPIMELATE LIGASE MURE HOMOLOG, CHLOROPLASTIC"/>
    <property type="match status" value="1"/>
</dbReference>
<dbReference type="Pfam" id="PF02875">
    <property type="entry name" value="Mur_ligase_C"/>
    <property type="match status" value="1"/>
</dbReference>
<dbReference type="Pfam" id="PF08245">
    <property type="entry name" value="Mur_ligase_M"/>
    <property type="match status" value="1"/>
</dbReference>
<dbReference type="SUPFAM" id="SSF53623">
    <property type="entry name" value="MurD-like peptide ligases, catalytic domain"/>
    <property type="match status" value="1"/>
</dbReference>
<dbReference type="SUPFAM" id="SSF53244">
    <property type="entry name" value="MurD-like peptide ligases, peptide-binding domain"/>
    <property type="match status" value="1"/>
</dbReference>
<dbReference type="SUPFAM" id="SSF63418">
    <property type="entry name" value="MurE/MurF N-terminal domain"/>
    <property type="match status" value="1"/>
</dbReference>
<keyword id="KW-0067">ATP-binding</keyword>
<keyword id="KW-0131">Cell cycle</keyword>
<keyword id="KW-0132">Cell division</keyword>
<keyword id="KW-0133">Cell shape</keyword>
<keyword id="KW-0961">Cell wall biogenesis/degradation</keyword>
<keyword id="KW-0963">Cytoplasm</keyword>
<keyword id="KW-0436">Ligase</keyword>
<keyword id="KW-0460">Magnesium</keyword>
<keyword id="KW-0547">Nucleotide-binding</keyword>
<keyword id="KW-0573">Peptidoglycan synthesis</keyword>
<protein>
    <recommendedName>
        <fullName evidence="1">UDP-N-acetylmuramoyl-L-alanyl-D-glutamate--2,6-diaminopimelate ligase</fullName>
        <ecNumber evidence="1">6.3.2.13</ecNumber>
    </recommendedName>
    <alternativeName>
        <fullName evidence="1">Meso-A2pm-adding enzyme</fullName>
    </alternativeName>
    <alternativeName>
        <fullName evidence="1">Meso-diaminopimelate-adding enzyme</fullName>
    </alternativeName>
    <alternativeName>
        <fullName evidence="1">UDP-MurNAc-L-Ala-D-Glu:meso-diaminopimelate ligase</fullName>
    </alternativeName>
    <alternativeName>
        <fullName evidence="1">UDP-MurNAc-tripeptide synthetase</fullName>
    </alternativeName>
    <alternativeName>
        <fullName evidence="1">UDP-N-acetylmuramyl-tripeptide synthetase</fullName>
    </alternativeName>
</protein>
<gene>
    <name evidence="1" type="primary">murE</name>
    <name type="ordered locus">Ajs_3675</name>
</gene>
<accession>A1WC11</accession>
<proteinExistence type="inferred from homology"/>
<feature type="chain" id="PRO_1000058582" description="UDP-N-acetylmuramoyl-L-alanyl-D-glutamate--2,6-diaminopimelate ligase">
    <location>
        <begin position="1"/>
        <end position="501"/>
    </location>
</feature>
<feature type="short sequence motif" description="Meso-diaminopimelate recognition motif">
    <location>
        <begin position="417"/>
        <end position="420"/>
    </location>
</feature>
<feature type="binding site" evidence="1">
    <location>
        <position position="29"/>
    </location>
    <ligand>
        <name>UDP-N-acetyl-alpha-D-muramoyl-L-alanyl-D-glutamate</name>
        <dbReference type="ChEBI" id="CHEBI:83900"/>
    </ligand>
</feature>
<feature type="binding site" evidence="1">
    <location>
        <begin position="112"/>
        <end position="118"/>
    </location>
    <ligand>
        <name>ATP</name>
        <dbReference type="ChEBI" id="CHEBI:30616"/>
    </ligand>
</feature>
<feature type="binding site" evidence="1">
    <location>
        <begin position="161"/>
        <end position="162"/>
    </location>
    <ligand>
        <name>UDP-N-acetyl-alpha-D-muramoyl-L-alanyl-D-glutamate</name>
        <dbReference type="ChEBI" id="CHEBI:83900"/>
    </ligand>
</feature>
<feature type="binding site" evidence="1">
    <location>
        <position position="188"/>
    </location>
    <ligand>
        <name>UDP-N-acetyl-alpha-D-muramoyl-L-alanyl-D-glutamate</name>
        <dbReference type="ChEBI" id="CHEBI:83900"/>
    </ligand>
</feature>
<feature type="binding site" evidence="1">
    <location>
        <position position="196"/>
    </location>
    <ligand>
        <name>UDP-N-acetyl-alpha-D-muramoyl-L-alanyl-D-glutamate</name>
        <dbReference type="ChEBI" id="CHEBI:83900"/>
    </ligand>
</feature>
<feature type="binding site" evidence="1">
    <location>
        <position position="393"/>
    </location>
    <ligand>
        <name>meso-2,6-diaminopimelate</name>
        <dbReference type="ChEBI" id="CHEBI:57791"/>
    </ligand>
</feature>
<feature type="binding site" evidence="1">
    <location>
        <begin position="417"/>
        <end position="420"/>
    </location>
    <ligand>
        <name>meso-2,6-diaminopimelate</name>
        <dbReference type="ChEBI" id="CHEBI:57791"/>
    </ligand>
</feature>
<feature type="binding site" evidence="1">
    <location>
        <position position="468"/>
    </location>
    <ligand>
        <name>meso-2,6-diaminopimelate</name>
        <dbReference type="ChEBI" id="CHEBI:57791"/>
    </ligand>
</feature>
<feature type="binding site" evidence="1">
    <location>
        <position position="472"/>
    </location>
    <ligand>
        <name>meso-2,6-diaminopimelate</name>
        <dbReference type="ChEBI" id="CHEBI:57791"/>
    </ligand>
</feature>
<feature type="modified residue" description="N6-carboxylysine" evidence="1">
    <location>
        <position position="228"/>
    </location>
</feature>
<name>MURE_ACISJ</name>
<sequence length="501" mass="52501">MNALHTLTTLQEAVDWLRQRVTGTLQTDSRLIQPGDGFIAWPGAATDGRAHVGDAVARGAAACLVECEGVEPFALAGDHIAALRGLKAATGMIASEWFGHPTQRLQVLAVTGTNGKTSTAWWLADALNQLSKEELPALAGCALVGTLGMGVPPALQTTGMTTPDPVRLQRAFAQFAEAGHRACAIEASSIGLAEHRLDGTRIHVALFTNFTQDHLDYHPGMAAYWQAKRALFDWPGLRAAVVNVDDPQGAALHAELQGSDLDLWSISLQGPARLQAKHIVHTGAGLALTVAEGAHTEVLQTQVIGLYNVSNLLGVIAGMRALGVPLAQALQACARLRPVPGRMEQLAAAGQPLVAVDYAHTPDALHQALAALKPVAAQRGGRLWCVFGCGGNRDAGKRPLMGAVAQREADEVIVTSDNPRGEEPQSIIHQILLGTIAGTSVRAEVDRAAAIAQALAEAGANDVVLIAGKGHEDYQEAAGQRVPFSDMAHARAALARRGGVA</sequence>
<reference key="1">
    <citation type="submission" date="2006-12" db="EMBL/GenBank/DDBJ databases">
        <title>Complete sequence of chromosome 1 of Acidovorax sp. JS42.</title>
        <authorList>
            <person name="Copeland A."/>
            <person name="Lucas S."/>
            <person name="Lapidus A."/>
            <person name="Barry K."/>
            <person name="Detter J.C."/>
            <person name="Glavina del Rio T."/>
            <person name="Dalin E."/>
            <person name="Tice H."/>
            <person name="Pitluck S."/>
            <person name="Chertkov O."/>
            <person name="Brettin T."/>
            <person name="Bruce D."/>
            <person name="Han C."/>
            <person name="Tapia R."/>
            <person name="Gilna P."/>
            <person name="Schmutz J."/>
            <person name="Larimer F."/>
            <person name="Land M."/>
            <person name="Hauser L."/>
            <person name="Kyrpides N."/>
            <person name="Kim E."/>
            <person name="Stahl D."/>
            <person name="Richardson P."/>
        </authorList>
    </citation>
    <scope>NUCLEOTIDE SEQUENCE [LARGE SCALE GENOMIC DNA]</scope>
    <source>
        <strain>JS42</strain>
    </source>
</reference>